<protein>
    <recommendedName>
        <fullName evidence="1">Large ribosomal subunit protein bL36</fullName>
    </recommendedName>
    <alternativeName>
        <fullName evidence="2">50S ribosomal protein L36</fullName>
    </alternativeName>
</protein>
<feature type="chain" id="PRO_1000101060" description="Large ribosomal subunit protein bL36">
    <location>
        <begin position="1"/>
        <end position="38"/>
    </location>
</feature>
<evidence type="ECO:0000255" key="1">
    <source>
        <dbReference type="HAMAP-Rule" id="MF_00251"/>
    </source>
</evidence>
<evidence type="ECO:0000305" key="2"/>
<comment type="similarity">
    <text evidence="1">Belongs to the bacterial ribosomal protein bL36 family.</text>
</comment>
<dbReference type="EMBL" id="CP001068">
    <property type="protein sequence ID" value="ACD28397.1"/>
    <property type="molecule type" value="Genomic_DNA"/>
</dbReference>
<dbReference type="SMR" id="B2UEJ7"/>
<dbReference type="STRING" id="402626.Rpic_3275"/>
<dbReference type="KEGG" id="rpi:Rpic_3275"/>
<dbReference type="eggNOG" id="COG0257">
    <property type="taxonomic scope" value="Bacteria"/>
</dbReference>
<dbReference type="HOGENOM" id="CLU_135723_6_2_4"/>
<dbReference type="GO" id="GO:0005737">
    <property type="term" value="C:cytoplasm"/>
    <property type="evidence" value="ECO:0007669"/>
    <property type="project" value="UniProtKB-ARBA"/>
</dbReference>
<dbReference type="GO" id="GO:1990904">
    <property type="term" value="C:ribonucleoprotein complex"/>
    <property type="evidence" value="ECO:0007669"/>
    <property type="project" value="UniProtKB-KW"/>
</dbReference>
<dbReference type="GO" id="GO:0005840">
    <property type="term" value="C:ribosome"/>
    <property type="evidence" value="ECO:0007669"/>
    <property type="project" value="UniProtKB-KW"/>
</dbReference>
<dbReference type="GO" id="GO:0003735">
    <property type="term" value="F:structural constituent of ribosome"/>
    <property type="evidence" value="ECO:0007669"/>
    <property type="project" value="InterPro"/>
</dbReference>
<dbReference type="GO" id="GO:0006412">
    <property type="term" value="P:translation"/>
    <property type="evidence" value="ECO:0007669"/>
    <property type="project" value="UniProtKB-UniRule"/>
</dbReference>
<dbReference type="HAMAP" id="MF_00251">
    <property type="entry name" value="Ribosomal_bL36"/>
    <property type="match status" value="1"/>
</dbReference>
<dbReference type="InterPro" id="IPR000473">
    <property type="entry name" value="Ribosomal_bL36"/>
</dbReference>
<dbReference type="InterPro" id="IPR035977">
    <property type="entry name" value="Ribosomal_bL36_sp"/>
</dbReference>
<dbReference type="NCBIfam" id="TIGR01022">
    <property type="entry name" value="rpmJ_bact"/>
    <property type="match status" value="1"/>
</dbReference>
<dbReference type="PANTHER" id="PTHR42888">
    <property type="entry name" value="50S RIBOSOMAL PROTEIN L36, CHLOROPLASTIC"/>
    <property type="match status" value="1"/>
</dbReference>
<dbReference type="PANTHER" id="PTHR42888:SF1">
    <property type="entry name" value="LARGE RIBOSOMAL SUBUNIT PROTEIN BL36C"/>
    <property type="match status" value="1"/>
</dbReference>
<dbReference type="Pfam" id="PF00444">
    <property type="entry name" value="Ribosomal_L36"/>
    <property type="match status" value="1"/>
</dbReference>
<dbReference type="SUPFAM" id="SSF57840">
    <property type="entry name" value="Ribosomal protein L36"/>
    <property type="match status" value="1"/>
</dbReference>
<dbReference type="PROSITE" id="PS00828">
    <property type="entry name" value="RIBOSOMAL_L36"/>
    <property type="match status" value="1"/>
</dbReference>
<accession>B2UEJ7</accession>
<name>RL36_RALPJ</name>
<reference key="1">
    <citation type="submission" date="2008-05" db="EMBL/GenBank/DDBJ databases">
        <title>Complete sequence of chromosome 1 of Ralstonia pickettii 12J.</title>
        <authorList>
            <person name="Lucas S."/>
            <person name="Copeland A."/>
            <person name="Lapidus A."/>
            <person name="Glavina del Rio T."/>
            <person name="Dalin E."/>
            <person name="Tice H."/>
            <person name="Bruce D."/>
            <person name="Goodwin L."/>
            <person name="Pitluck S."/>
            <person name="Meincke L."/>
            <person name="Brettin T."/>
            <person name="Detter J.C."/>
            <person name="Han C."/>
            <person name="Kuske C.R."/>
            <person name="Schmutz J."/>
            <person name="Larimer F."/>
            <person name="Land M."/>
            <person name="Hauser L."/>
            <person name="Kyrpides N."/>
            <person name="Mikhailova N."/>
            <person name="Marsh T."/>
            <person name="Richardson P."/>
        </authorList>
    </citation>
    <scope>NUCLEOTIDE SEQUENCE [LARGE SCALE GENOMIC DNA]</scope>
    <source>
        <strain>12J</strain>
    </source>
</reference>
<proteinExistence type="inferred from homology"/>
<gene>
    <name evidence="1" type="primary">rpmJ</name>
    <name type="ordered locus">Rpic_3275</name>
</gene>
<organism>
    <name type="scientific">Ralstonia pickettii (strain 12J)</name>
    <dbReference type="NCBI Taxonomy" id="402626"/>
    <lineage>
        <taxon>Bacteria</taxon>
        <taxon>Pseudomonadati</taxon>
        <taxon>Pseudomonadota</taxon>
        <taxon>Betaproteobacteria</taxon>
        <taxon>Burkholderiales</taxon>
        <taxon>Burkholderiaceae</taxon>
        <taxon>Ralstonia</taxon>
    </lineage>
</organism>
<sequence>MKVLASVKRICRNCKIIKRKGVVRVICSSDPRHKQRQG</sequence>
<keyword id="KW-0687">Ribonucleoprotein</keyword>
<keyword id="KW-0689">Ribosomal protein</keyword>